<feature type="chain" id="PRO_1000050020" description="Sulfur carrier protein TusA">
    <location>
        <begin position="1"/>
        <end position="80"/>
    </location>
</feature>
<feature type="active site" description="Cysteine persulfide intermediate" evidence="1">
    <location>
        <position position="17"/>
    </location>
</feature>
<evidence type="ECO:0000255" key="1">
    <source>
        <dbReference type="HAMAP-Rule" id="MF_00413"/>
    </source>
</evidence>
<organism>
    <name type="scientific">Pseudomonas entomophila (strain L48)</name>
    <dbReference type="NCBI Taxonomy" id="384676"/>
    <lineage>
        <taxon>Bacteria</taxon>
        <taxon>Pseudomonadati</taxon>
        <taxon>Pseudomonadota</taxon>
        <taxon>Gammaproteobacteria</taxon>
        <taxon>Pseudomonadales</taxon>
        <taxon>Pseudomonadaceae</taxon>
        <taxon>Pseudomonas</taxon>
    </lineage>
</organism>
<keyword id="KW-0963">Cytoplasm</keyword>
<dbReference type="EMBL" id="CT573326">
    <property type="protein sequence ID" value="CAK16470.1"/>
    <property type="molecule type" value="Genomic_DNA"/>
</dbReference>
<dbReference type="RefSeq" id="WP_011534847.1">
    <property type="nucleotide sequence ID" value="NC_008027.1"/>
</dbReference>
<dbReference type="SMR" id="Q1I7B2"/>
<dbReference type="STRING" id="384676.PSEEN3754"/>
<dbReference type="GeneID" id="32806793"/>
<dbReference type="KEGG" id="pen:PSEEN3754"/>
<dbReference type="eggNOG" id="COG0425">
    <property type="taxonomic scope" value="Bacteria"/>
</dbReference>
<dbReference type="HOGENOM" id="CLU_165255_5_1_6"/>
<dbReference type="OrthoDB" id="9797352at2"/>
<dbReference type="Proteomes" id="UP000000658">
    <property type="component" value="Chromosome"/>
</dbReference>
<dbReference type="GO" id="GO:0005737">
    <property type="term" value="C:cytoplasm"/>
    <property type="evidence" value="ECO:0007669"/>
    <property type="project" value="UniProtKB-SubCell"/>
</dbReference>
<dbReference type="GO" id="GO:0097163">
    <property type="term" value="F:sulfur carrier activity"/>
    <property type="evidence" value="ECO:0007669"/>
    <property type="project" value="UniProtKB-UniRule"/>
</dbReference>
<dbReference type="GO" id="GO:0002143">
    <property type="term" value="P:tRNA wobble position uridine thiolation"/>
    <property type="evidence" value="ECO:0007669"/>
    <property type="project" value="InterPro"/>
</dbReference>
<dbReference type="CDD" id="cd03423">
    <property type="entry name" value="SirA"/>
    <property type="match status" value="1"/>
</dbReference>
<dbReference type="Gene3D" id="3.30.110.40">
    <property type="entry name" value="TusA-like domain"/>
    <property type="match status" value="1"/>
</dbReference>
<dbReference type="HAMAP" id="MF_00413">
    <property type="entry name" value="Thiourid_synth_A"/>
    <property type="match status" value="1"/>
</dbReference>
<dbReference type="InterPro" id="IPR022931">
    <property type="entry name" value="Sulphur_carrier_TusA"/>
</dbReference>
<dbReference type="InterPro" id="IPR001455">
    <property type="entry name" value="TusA-like"/>
</dbReference>
<dbReference type="InterPro" id="IPR036868">
    <property type="entry name" value="TusA-like_sf"/>
</dbReference>
<dbReference type="NCBIfam" id="NF001423">
    <property type="entry name" value="PRK00299.1"/>
    <property type="match status" value="1"/>
</dbReference>
<dbReference type="PANTHER" id="PTHR33279:SF2">
    <property type="entry name" value="SULFUR CARRIER PROTEIN TUSA"/>
    <property type="match status" value="1"/>
</dbReference>
<dbReference type="PANTHER" id="PTHR33279">
    <property type="entry name" value="SULFUR CARRIER PROTEIN YEDF-RELATED"/>
    <property type="match status" value="1"/>
</dbReference>
<dbReference type="Pfam" id="PF01206">
    <property type="entry name" value="TusA"/>
    <property type="match status" value="1"/>
</dbReference>
<dbReference type="SUPFAM" id="SSF64307">
    <property type="entry name" value="SirA-like"/>
    <property type="match status" value="1"/>
</dbReference>
<dbReference type="PROSITE" id="PS01148">
    <property type="entry name" value="UPF0033"/>
    <property type="match status" value="1"/>
</dbReference>
<accession>Q1I7B2</accession>
<proteinExistence type="inferred from homology"/>
<gene>
    <name evidence="1" type="primary">tusA</name>
    <name type="ordered locus">PSEEN3754</name>
</gene>
<protein>
    <recommendedName>
        <fullName evidence="1">Sulfur carrier protein TusA</fullName>
    </recommendedName>
</protein>
<comment type="function">
    <text evidence="1">Sulfur carrier protein which probably makes part of a sulfur-relay system.</text>
</comment>
<comment type="subcellular location">
    <subcellularLocation>
        <location evidence="1">Cytoplasm</location>
    </subcellularLocation>
</comment>
<comment type="similarity">
    <text evidence="1">Belongs to the sulfur carrier protein TusA family.</text>
</comment>
<sequence>MTDLIHDATLDATGLNCPEPVMMLHKHVRELAAGGVLKVIATDPSTRRDIPKFCVFLGHELLGQQEEAGTYLYWIRKKAD</sequence>
<name>TUSA_PSEE4</name>
<reference key="1">
    <citation type="journal article" date="2006" name="Nat. Biotechnol.">
        <title>Complete genome sequence of the entomopathogenic and metabolically versatile soil bacterium Pseudomonas entomophila.</title>
        <authorList>
            <person name="Vodovar N."/>
            <person name="Vallenet D."/>
            <person name="Cruveiller S."/>
            <person name="Rouy Z."/>
            <person name="Barbe V."/>
            <person name="Acosta C."/>
            <person name="Cattolico L."/>
            <person name="Jubin C."/>
            <person name="Lajus A."/>
            <person name="Segurens B."/>
            <person name="Vacherie B."/>
            <person name="Wincker P."/>
            <person name="Weissenbach J."/>
            <person name="Lemaitre B."/>
            <person name="Medigue C."/>
            <person name="Boccard F."/>
        </authorList>
    </citation>
    <scope>NUCLEOTIDE SEQUENCE [LARGE SCALE GENOMIC DNA]</scope>
    <source>
        <strain>L48</strain>
    </source>
</reference>